<evidence type="ECO:0000255" key="1">
    <source>
        <dbReference type="HAMAP-Rule" id="MF_00388"/>
    </source>
</evidence>
<accession>Q2A186</accession>
<dbReference type="EC" id="3.5.1.108" evidence="1"/>
<dbReference type="EMBL" id="AM233362">
    <property type="protein sequence ID" value="CAJ80345.1"/>
    <property type="molecule type" value="Genomic_DNA"/>
</dbReference>
<dbReference type="RefSeq" id="WP_003017478.1">
    <property type="nucleotide sequence ID" value="NZ_CP009694.1"/>
</dbReference>
<dbReference type="SMR" id="Q2A186"/>
<dbReference type="KEGG" id="ftl:FTL_1906"/>
<dbReference type="UniPathway" id="UPA00359">
    <property type="reaction ID" value="UER00478"/>
</dbReference>
<dbReference type="Proteomes" id="UP000001944">
    <property type="component" value="Chromosome"/>
</dbReference>
<dbReference type="GO" id="GO:0016020">
    <property type="term" value="C:membrane"/>
    <property type="evidence" value="ECO:0007669"/>
    <property type="project" value="GOC"/>
</dbReference>
<dbReference type="GO" id="GO:0046872">
    <property type="term" value="F:metal ion binding"/>
    <property type="evidence" value="ECO:0007669"/>
    <property type="project" value="UniProtKB-KW"/>
</dbReference>
<dbReference type="GO" id="GO:0103117">
    <property type="term" value="F:UDP-3-O-acyl-N-acetylglucosamine deacetylase activity"/>
    <property type="evidence" value="ECO:0007669"/>
    <property type="project" value="UniProtKB-UniRule"/>
</dbReference>
<dbReference type="GO" id="GO:0009245">
    <property type="term" value="P:lipid A biosynthetic process"/>
    <property type="evidence" value="ECO:0007669"/>
    <property type="project" value="UniProtKB-UniRule"/>
</dbReference>
<dbReference type="Gene3D" id="3.30.230.20">
    <property type="entry name" value="lpxc deacetylase, domain 1"/>
    <property type="match status" value="1"/>
</dbReference>
<dbReference type="Gene3D" id="3.30.1700.10">
    <property type="entry name" value="lpxc deacetylase, domain 2"/>
    <property type="match status" value="1"/>
</dbReference>
<dbReference type="HAMAP" id="MF_00388">
    <property type="entry name" value="LpxC"/>
    <property type="match status" value="1"/>
</dbReference>
<dbReference type="InterPro" id="IPR020568">
    <property type="entry name" value="Ribosomal_Su5_D2-typ_SF"/>
</dbReference>
<dbReference type="InterPro" id="IPR004463">
    <property type="entry name" value="UDP-acyl_GlcNac_deAcase"/>
</dbReference>
<dbReference type="InterPro" id="IPR011334">
    <property type="entry name" value="UDP-acyl_GlcNac_deAcase_C"/>
</dbReference>
<dbReference type="InterPro" id="IPR015870">
    <property type="entry name" value="UDP-acyl_N-AcGlcN_deAcase_N"/>
</dbReference>
<dbReference type="NCBIfam" id="TIGR00325">
    <property type="entry name" value="lpxC"/>
    <property type="match status" value="1"/>
</dbReference>
<dbReference type="PANTHER" id="PTHR33694">
    <property type="entry name" value="UDP-3-O-ACYL-N-ACETYLGLUCOSAMINE DEACETYLASE 1, MITOCHONDRIAL-RELATED"/>
    <property type="match status" value="1"/>
</dbReference>
<dbReference type="PANTHER" id="PTHR33694:SF1">
    <property type="entry name" value="UDP-3-O-ACYL-N-ACETYLGLUCOSAMINE DEACETYLASE 1, MITOCHONDRIAL-RELATED"/>
    <property type="match status" value="1"/>
</dbReference>
<dbReference type="Pfam" id="PF03331">
    <property type="entry name" value="LpxC"/>
    <property type="match status" value="1"/>
</dbReference>
<dbReference type="SUPFAM" id="SSF54211">
    <property type="entry name" value="Ribosomal protein S5 domain 2-like"/>
    <property type="match status" value="2"/>
</dbReference>
<name>LPXC_FRATH</name>
<sequence length="286" mass="31991">MMKQKTIAKEFSVTGVGLHSGVDVSMTVKPADIDSGIVFRRADLTPVVDIKVTPSSIKEAIMCTLLTKDGDQNLSVSTIEHLMSAFAMFEVDNVLIEVNAPELPVMDGSSYEFTQLLKQVGIVEQNSARKGIKILKPVRVEHEDKFAEVLPSDTLKYEFKIHWDHPVIAATNDHIVFEYDLDEYIKMVSKARTFGFYEQLAYLHQNNLAKGASLDNAVGVTNEGVLNEGGLRYDDEFVRHKLLDAIGDFYVGGYILGHFNCFKSGHTLNNKLLHAVFADKDAWEYI</sequence>
<comment type="function">
    <text evidence="1">Catalyzes the hydrolysis of UDP-3-O-myristoyl-N-acetylglucosamine to form UDP-3-O-myristoylglucosamine and acetate, the committed step in lipid A biosynthesis.</text>
</comment>
<comment type="catalytic activity">
    <reaction evidence="1">
        <text>a UDP-3-O-[(3R)-3-hydroxyacyl]-N-acetyl-alpha-D-glucosamine + H2O = a UDP-3-O-[(3R)-3-hydroxyacyl]-alpha-D-glucosamine + acetate</text>
        <dbReference type="Rhea" id="RHEA:67816"/>
        <dbReference type="ChEBI" id="CHEBI:15377"/>
        <dbReference type="ChEBI" id="CHEBI:30089"/>
        <dbReference type="ChEBI" id="CHEBI:137740"/>
        <dbReference type="ChEBI" id="CHEBI:173225"/>
        <dbReference type="EC" id="3.5.1.108"/>
    </reaction>
</comment>
<comment type="cofactor">
    <cofactor evidence="1">
        <name>Zn(2+)</name>
        <dbReference type="ChEBI" id="CHEBI:29105"/>
    </cofactor>
</comment>
<comment type="pathway">
    <text evidence="1">Glycolipid biosynthesis; lipid IV(A) biosynthesis; lipid IV(A) from (3R)-3-hydroxytetradecanoyl-[acyl-carrier-protein] and UDP-N-acetyl-alpha-D-glucosamine: step 2/6.</text>
</comment>
<comment type="similarity">
    <text evidence="1">Belongs to the LpxC family.</text>
</comment>
<protein>
    <recommendedName>
        <fullName evidence="1">UDP-3-O-acyl-N-acetylglucosamine deacetylase</fullName>
        <shortName evidence="1">UDP-3-O-acyl-GlcNAc deacetylase</shortName>
        <ecNumber evidence="1">3.5.1.108</ecNumber>
    </recommendedName>
    <alternativeName>
        <fullName evidence="1">UDP-3-O-[R-3-hydroxymyristoyl]-N-acetylglucosamine deacetylase</fullName>
    </alternativeName>
</protein>
<feature type="chain" id="PRO_1000122791" description="UDP-3-O-acyl-N-acetylglucosamine deacetylase">
    <location>
        <begin position="1"/>
        <end position="286"/>
    </location>
</feature>
<feature type="active site" description="Proton donor" evidence="1">
    <location>
        <position position="266"/>
    </location>
</feature>
<feature type="binding site" evidence="1">
    <location>
        <position position="81"/>
    </location>
    <ligand>
        <name>Zn(2+)</name>
        <dbReference type="ChEBI" id="CHEBI:29105"/>
    </ligand>
</feature>
<feature type="binding site" evidence="1">
    <location>
        <position position="240"/>
    </location>
    <ligand>
        <name>Zn(2+)</name>
        <dbReference type="ChEBI" id="CHEBI:29105"/>
    </ligand>
</feature>
<feature type="binding site" evidence="1">
    <location>
        <position position="244"/>
    </location>
    <ligand>
        <name>Zn(2+)</name>
        <dbReference type="ChEBI" id="CHEBI:29105"/>
    </ligand>
</feature>
<organism>
    <name type="scientific">Francisella tularensis subsp. holarctica (strain LVS)</name>
    <dbReference type="NCBI Taxonomy" id="376619"/>
    <lineage>
        <taxon>Bacteria</taxon>
        <taxon>Pseudomonadati</taxon>
        <taxon>Pseudomonadota</taxon>
        <taxon>Gammaproteobacteria</taxon>
        <taxon>Thiotrichales</taxon>
        <taxon>Francisellaceae</taxon>
        <taxon>Francisella</taxon>
    </lineage>
</organism>
<keyword id="KW-0378">Hydrolase</keyword>
<keyword id="KW-0441">Lipid A biosynthesis</keyword>
<keyword id="KW-0444">Lipid biosynthesis</keyword>
<keyword id="KW-0443">Lipid metabolism</keyword>
<keyword id="KW-0479">Metal-binding</keyword>
<keyword id="KW-1185">Reference proteome</keyword>
<keyword id="KW-0862">Zinc</keyword>
<gene>
    <name evidence="1" type="primary">lpxC</name>
    <name type="ordered locus">FTL_1906</name>
</gene>
<proteinExistence type="inferred from homology"/>
<reference key="1">
    <citation type="submission" date="2006-03" db="EMBL/GenBank/DDBJ databases">
        <title>Complete genome sequence of Francisella tularensis LVS (Live Vaccine Strain).</title>
        <authorList>
            <person name="Chain P."/>
            <person name="Larimer F."/>
            <person name="Land M."/>
            <person name="Stilwagen S."/>
            <person name="Larsson P."/>
            <person name="Bearden S."/>
            <person name="Chu M."/>
            <person name="Oyston P."/>
            <person name="Forsman M."/>
            <person name="Andersson S."/>
            <person name="Lindler L."/>
            <person name="Titball R."/>
            <person name="Garcia E."/>
        </authorList>
    </citation>
    <scope>NUCLEOTIDE SEQUENCE [LARGE SCALE GENOMIC DNA]</scope>
    <source>
        <strain>LVS</strain>
    </source>
</reference>